<organism>
    <name type="scientific">Oryza sativa subsp. japonica</name>
    <name type="common">Rice</name>
    <dbReference type="NCBI Taxonomy" id="39947"/>
    <lineage>
        <taxon>Eukaryota</taxon>
        <taxon>Viridiplantae</taxon>
        <taxon>Streptophyta</taxon>
        <taxon>Embryophyta</taxon>
        <taxon>Tracheophyta</taxon>
        <taxon>Spermatophyta</taxon>
        <taxon>Magnoliopsida</taxon>
        <taxon>Liliopsida</taxon>
        <taxon>Poales</taxon>
        <taxon>Poaceae</taxon>
        <taxon>BOP clade</taxon>
        <taxon>Oryzoideae</taxon>
        <taxon>Oryzeae</taxon>
        <taxon>Oryzinae</taxon>
        <taxon>Oryza</taxon>
        <taxon>Oryza sativa</taxon>
    </lineage>
</organism>
<protein>
    <recommendedName>
        <fullName>Auxin-responsive protein IAA14</fullName>
    </recommendedName>
    <alternativeName>
        <fullName>Indoleacetic acid-induced protein 14</fullName>
    </alternativeName>
</protein>
<reference key="1">
    <citation type="journal article" date="2005" name="Genome Res.">
        <title>Sequence, annotation, and analysis of synteny between rice chromosome 3 and diverged grass species.</title>
        <authorList>
            <consortium name="The rice chromosome 3 sequencing consortium"/>
            <person name="Buell C.R."/>
            <person name="Yuan Q."/>
            <person name="Ouyang S."/>
            <person name="Liu J."/>
            <person name="Zhu W."/>
            <person name="Wang A."/>
            <person name="Maiti R."/>
            <person name="Haas B."/>
            <person name="Wortman J."/>
            <person name="Pertea M."/>
            <person name="Jones K.M."/>
            <person name="Kim M."/>
            <person name="Overton L."/>
            <person name="Tsitrin T."/>
            <person name="Fadrosh D."/>
            <person name="Bera J."/>
            <person name="Weaver B."/>
            <person name="Jin S."/>
            <person name="Johri S."/>
            <person name="Reardon M."/>
            <person name="Webb K."/>
            <person name="Hill J."/>
            <person name="Moffat K."/>
            <person name="Tallon L."/>
            <person name="Van Aken S."/>
            <person name="Lewis M."/>
            <person name="Utterback T."/>
            <person name="Feldblyum T."/>
            <person name="Zismann V."/>
            <person name="Iobst S."/>
            <person name="Hsiao J."/>
            <person name="de Vazeille A.R."/>
            <person name="Salzberg S.L."/>
            <person name="White O."/>
            <person name="Fraser C.M."/>
            <person name="Yu Y."/>
            <person name="Kim H."/>
            <person name="Rambo T."/>
            <person name="Currie J."/>
            <person name="Collura K."/>
            <person name="Kernodle-Thompson S."/>
            <person name="Wei F."/>
            <person name="Kudrna K."/>
            <person name="Ammiraju J.S.S."/>
            <person name="Luo M."/>
            <person name="Goicoechea J.L."/>
            <person name="Wing R.A."/>
            <person name="Henry D."/>
            <person name="Oates R."/>
            <person name="Palmer M."/>
            <person name="Pries G."/>
            <person name="Saski C."/>
            <person name="Simmons J."/>
            <person name="Soderlund C."/>
            <person name="Nelson W."/>
            <person name="de la Bastide M."/>
            <person name="Spiegel L."/>
            <person name="Nascimento L."/>
            <person name="Huang E."/>
            <person name="Preston R."/>
            <person name="Zutavern T."/>
            <person name="Palmer L."/>
            <person name="O'Shaughnessy A."/>
            <person name="Dike S."/>
            <person name="McCombie W.R."/>
            <person name="Minx P."/>
            <person name="Cordum H."/>
            <person name="Wilson R."/>
            <person name="Jin W."/>
            <person name="Lee H.R."/>
            <person name="Jiang J."/>
            <person name="Jackson S."/>
        </authorList>
    </citation>
    <scope>NUCLEOTIDE SEQUENCE [LARGE SCALE GENOMIC DNA]</scope>
    <source>
        <strain>cv. Nipponbare</strain>
    </source>
</reference>
<reference key="2">
    <citation type="journal article" date="2005" name="Nature">
        <title>The map-based sequence of the rice genome.</title>
        <authorList>
            <consortium name="International rice genome sequencing project (IRGSP)"/>
        </authorList>
    </citation>
    <scope>NUCLEOTIDE SEQUENCE [LARGE SCALE GENOMIC DNA]</scope>
    <source>
        <strain>cv. Nipponbare</strain>
    </source>
</reference>
<reference key="3">
    <citation type="journal article" date="2013" name="Rice">
        <title>Improvement of the Oryza sativa Nipponbare reference genome using next generation sequence and optical map data.</title>
        <authorList>
            <person name="Kawahara Y."/>
            <person name="de la Bastide M."/>
            <person name="Hamilton J.P."/>
            <person name="Kanamori H."/>
            <person name="McCombie W.R."/>
            <person name="Ouyang S."/>
            <person name="Schwartz D.C."/>
            <person name="Tanaka T."/>
            <person name="Wu J."/>
            <person name="Zhou S."/>
            <person name="Childs K.L."/>
            <person name="Davidson R.M."/>
            <person name="Lin H."/>
            <person name="Quesada-Ocampo L."/>
            <person name="Vaillancourt B."/>
            <person name="Sakai H."/>
            <person name="Lee S.S."/>
            <person name="Kim J."/>
            <person name="Numa H."/>
            <person name="Itoh T."/>
            <person name="Buell C.R."/>
            <person name="Matsumoto T."/>
        </authorList>
    </citation>
    <scope>GENOME REANNOTATION</scope>
    <source>
        <strain>cv. Nipponbare</strain>
    </source>
</reference>
<reference key="4">
    <citation type="journal article" date="2003" name="Science">
        <title>Collection, mapping, and annotation of over 28,000 cDNA clones from japonica rice.</title>
        <authorList>
            <consortium name="The rice full-length cDNA consortium"/>
        </authorList>
    </citation>
    <scope>NUCLEOTIDE SEQUENCE [LARGE SCALE MRNA]</scope>
    <source>
        <strain>cv. Nipponbare</strain>
    </source>
</reference>
<reference key="5">
    <citation type="journal article" date="2006" name="Funct. Integr. Genomics">
        <title>Structure and expression analysis of early auxin-responsive Aux/IAA gene family in rice (Oryza sativa).</title>
        <authorList>
            <person name="Jain M."/>
            <person name="Kaur N."/>
            <person name="Garg R."/>
            <person name="Thakur J.K."/>
            <person name="Tyagi A.K."/>
            <person name="Khurana J.P."/>
        </authorList>
    </citation>
    <scope>TISSUE SPECIFICITY</scope>
    <scope>INDUCTION</scope>
    <scope>NOMENCLATURE</scope>
</reference>
<feature type="chain" id="PRO_0000223213" description="Auxin-responsive protein IAA14">
    <location>
        <begin position="1"/>
        <end position="195"/>
    </location>
</feature>
<feature type="domain" description="PB1" evidence="2">
    <location>
        <begin position="108"/>
        <end position="191"/>
    </location>
</feature>
<feature type="region of interest" description="Disordered" evidence="3">
    <location>
        <begin position="1"/>
        <end position="61"/>
    </location>
</feature>
<feature type="region of interest" description="Disordered" evidence="3">
    <location>
        <begin position="85"/>
        <end position="107"/>
    </location>
</feature>
<feature type="short sequence motif" description="EAR-like (transcriptional repression)" evidence="1">
    <location>
        <begin position="10"/>
        <end position="14"/>
    </location>
</feature>
<keyword id="KW-0927">Auxin signaling pathway</keyword>
<keyword id="KW-0539">Nucleus</keyword>
<keyword id="KW-1185">Reference proteome</keyword>
<keyword id="KW-0678">Repressor</keyword>
<keyword id="KW-0804">Transcription</keyword>
<keyword id="KW-0805">Transcription regulation</keyword>
<gene>
    <name type="primary">IAA14</name>
    <name type="ordered locus">Os03g0797800</name>
    <name type="ordered locus">LOC_Os03g58350</name>
    <name type="ORF">OSJNBa0094F01.9</name>
</gene>
<proteinExistence type="evidence at transcript level"/>
<sequence>MAAESIDAELRLGLPGSGGGDGVAAKKRRSASSTVKSEASGTACCGGAGARDVEDGASPASKVQVVGWPPVGSYRRSTFQSSSSSTAAAAKGKGGGETDQGRKNKGGGLYVKVSMDGAPYLRKVDLRMYGGYRELRDALDALFGCFSADASASAAHFAVAYEDKDGDLMLAGDVPWDMFISSCKKLRIMRGSEAR</sequence>
<comment type="function">
    <text evidence="1">Aux/IAA proteins are short-lived transcriptional factors that function as repressors of early auxin response genes at low auxin concentrations.</text>
</comment>
<comment type="subunit">
    <text evidence="1">Homodimers and heterodimers.</text>
</comment>
<comment type="subcellular location">
    <subcellularLocation>
        <location evidence="1">Nucleus</location>
    </subcellularLocation>
</comment>
<comment type="tissue specificity">
    <text evidence="4">Highly expressed in flowers. Expressed in etiolated seedlings.</text>
</comment>
<comment type="induction">
    <text evidence="4">By auxin.</text>
</comment>
<comment type="similarity">
    <text evidence="5">Belongs to the Aux/IAA family.</text>
</comment>
<name>IAA14_ORYSJ</name>
<evidence type="ECO:0000250" key="1"/>
<evidence type="ECO:0000255" key="2">
    <source>
        <dbReference type="PROSITE-ProRule" id="PRU01081"/>
    </source>
</evidence>
<evidence type="ECO:0000256" key="3">
    <source>
        <dbReference type="SAM" id="MobiDB-lite"/>
    </source>
</evidence>
<evidence type="ECO:0000269" key="4">
    <source>
    </source>
</evidence>
<evidence type="ECO:0000305" key="5"/>
<accession>Q7Y1H8</accession>
<dbReference type="EMBL" id="AC093713">
    <property type="protein sequence ID" value="AAP44680.1"/>
    <property type="molecule type" value="Genomic_DNA"/>
</dbReference>
<dbReference type="EMBL" id="AP014959">
    <property type="status" value="NOT_ANNOTATED_CDS"/>
    <property type="molecule type" value="Genomic_DNA"/>
</dbReference>
<dbReference type="EMBL" id="AK059619">
    <property type="status" value="NOT_ANNOTATED_CDS"/>
    <property type="molecule type" value="mRNA"/>
</dbReference>
<dbReference type="SMR" id="Q7Y1H8"/>
<dbReference type="FunCoup" id="Q7Y1H8">
    <property type="interactions" value="354"/>
</dbReference>
<dbReference type="STRING" id="39947.Q7Y1H8"/>
<dbReference type="PaxDb" id="39947-Q7Y1H8"/>
<dbReference type="eggNOG" id="ENOG502QU81">
    <property type="taxonomic scope" value="Eukaryota"/>
</dbReference>
<dbReference type="InParanoid" id="Q7Y1H8"/>
<dbReference type="Proteomes" id="UP000000763">
    <property type="component" value="Chromosome 3"/>
</dbReference>
<dbReference type="Proteomes" id="UP000059680">
    <property type="component" value="Chromosome 3"/>
</dbReference>
<dbReference type="GO" id="GO:0005634">
    <property type="term" value="C:nucleus"/>
    <property type="evidence" value="ECO:0007669"/>
    <property type="project" value="UniProtKB-SubCell"/>
</dbReference>
<dbReference type="GO" id="GO:0009734">
    <property type="term" value="P:auxin-activated signaling pathway"/>
    <property type="evidence" value="ECO:0007669"/>
    <property type="project" value="UniProtKB-KW"/>
</dbReference>
<dbReference type="GO" id="GO:0006355">
    <property type="term" value="P:regulation of DNA-templated transcription"/>
    <property type="evidence" value="ECO:0007669"/>
    <property type="project" value="InterPro"/>
</dbReference>
<dbReference type="GO" id="GO:0009733">
    <property type="term" value="P:response to auxin"/>
    <property type="evidence" value="ECO:0000305"/>
    <property type="project" value="Gramene"/>
</dbReference>
<dbReference type="Gene3D" id="3.10.20.90">
    <property type="entry name" value="Phosphatidylinositol 3-kinase Catalytic Subunit, Chain A, domain 1"/>
    <property type="match status" value="1"/>
</dbReference>
<dbReference type="InterPro" id="IPR033389">
    <property type="entry name" value="AUX/IAA_dom"/>
</dbReference>
<dbReference type="InterPro" id="IPR003311">
    <property type="entry name" value="AUX_IAA"/>
</dbReference>
<dbReference type="InterPro" id="IPR053793">
    <property type="entry name" value="PB1-like"/>
</dbReference>
<dbReference type="PANTHER" id="PTHR31734:SF14">
    <property type="entry name" value="AUXIN-RESPONSIVE PROTEIN IAA14"/>
    <property type="match status" value="1"/>
</dbReference>
<dbReference type="PANTHER" id="PTHR31734">
    <property type="entry name" value="AUXIN-RESPONSIVE PROTEIN IAA17"/>
    <property type="match status" value="1"/>
</dbReference>
<dbReference type="Pfam" id="PF02309">
    <property type="entry name" value="AUX_IAA"/>
    <property type="match status" value="1"/>
</dbReference>
<dbReference type="SUPFAM" id="SSF54277">
    <property type="entry name" value="CAD &amp; PB1 domains"/>
    <property type="match status" value="1"/>
</dbReference>
<dbReference type="PROSITE" id="PS51745">
    <property type="entry name" value="PB1"/>
    <property type="match status" value="1"/>
</dbReference>